<sequence length="868" mass="98376">MLKGIHKYLLMCFGTVLFTVQANAARIMSNNPIKEDWQCKVVDGEWSCKRAKKPKSVFDKKLTKTEKEKALADDLAWVKKPSYFVGGYYSNDSQFTKALCESKKTDLSYEKSEFDNDGTLIASGNVQVLQCDQELYGNNAIINLNSNNSAIRSLVMAGDVIVKQPSTGIVIRTTELDADMNDGTYSTGEAYFRLAREMPKTRIYDKEHFSGYLRGYAKTFKKESSGDIVLSDGYITSGDPYDNAWKITGNNIDIDTNTHMAYVKNGYFEIQDIPVMYIPYFSHPIDDRRRSGFLYPGFVQNANSGIGISVPYYFNLAPNYDLMLQSVIWSQRGIMENGTFRYMTKYFQGQFEGSLVPYDFKEGKMRGSFTLSTTGQYENINTNFKYEYVSDQNYYNDFSAGNVNLVTKTLLDREFDLTYTNDYVDSGLTVLDYGVVNPLLTVDNTPYAKLPEVKLNLTSDGYTPDYLTLSAQTLNTFFYKTAGPANTNPGAPQGTNVNAFRAYESPKIAFNFNKTWGYLNPSLEVPIRYYQLKNSPTDTIQFANSSVTSVLPIFNIDAGAYFDKDYTNENGTYTSTLHPRLFYTYIPYQDQTNIPLFDTSLQNEQYMQMFQVNRFTGYDRINNANQLTYALEASTTNQEDGTTLASAKIGQMAYFADRKVNLCQGNSACPNPGLMDPFSTDTFSPIMTSFEFQVMKNIYLSAQVNYRVKQQNVDYQVYQLSYKDENENIFNVSYNNIANNWSSLTQQQIAEGAKPQPQETITLSTILNITDHWGIAALWNYNFQQKQIANIFAGLQYNAKSWAVRALWQKTAYTNQDPNNPTLLGPLVNTYMFEFELKGLGGIGNTSDISSRLQQINGYQVGEWGDGI</sequence>
<keyword id="KW-0998">Cell outer membrane</keyword>
<keyword id="KW-0472">Membrane</keyword>
<keyword id="KW-0732">Signal</keyword>
<name>LPTD_FRATN</name>
<protein>
    <recommendedName>
        <fullName evidence="1">LPS-assembly protein LptD</fullName>
    </recommendedName>
</protein>
<evidence type="ECO:0000255" key="1">
    <source>
        <dbReference type="HAMAP-Rule" id="MF_01411"/>
    </source>
</evidence>
<gene>
    <name evidence="1" type="primary">lptD</name>
    <name type="synonym">imp</name>
    <name type="synonym">ostA</name>
    <name type="ordered locus">FTN_0558</name>
</gene>
<reference key="1">
    <citation type="journal article" date="2007" name="Genome Biol.">
        <title>Comparison of Francisella tularensis genomes reveals evolutionary events associated with the emergence of human pathogenic strains.</title>
        <authorList>
            <person name="Rohmer L."/>
            <person name="Fong C."/>
            <person name="Abmayr S."/>
            <person name="Wasnick M."/>
            <person name="Larson Freeman T.J."/>
            <person name="Radey M."/>
            <person name="Guina T."/>
            <person name="Svensson K."/>
            <person name="Hayden H.S."/>
            <person name="Jacobs M."/>
            <person name="Gallagher L.A."/>
            <person name="Manoil C."/>
            <person name="Ernst R.K."/>
            <person name="Drees B."/>
            <person name="Buckley D."/>
            <person name="Haugen E."/>
            <person name="Bovee D."/>
            <person name="Zhou Y."/>
            <person name="Chang J."/>
            <person name="Levy R."/>
            <person name="Lim R."/>
            <person name="Gillett W."/>
            <person name="Guenthener D."/>
            <person name="Kang A."/>
            <person name="Shaffer S.A."/>
            <person name="Taylor G."/>
            <person name="Chen J."/>
            <person name="Gallis B."/>
            <person name="D'Argenio D.A."/>
            <person name="Forsman M."/>
            <person name="Olson M.V."/>
            <person name="Goodlett D.R."/>
            <person name="Kaul R."/>
            <person name="Miller S.I."/>
            <person name="Brittnacher M.J."/>
        </authorList>
    </citation>
    <scope>NUCLEOTIDE SEQUENCE [LARGE SCALE GENOMIC DNA]</scope>
    <source>
        <strain>U112</strain>
    </source>
</reference>
<organism>
    <name type="scientific">Francisella tularensis subsp. novicida (strain U112)</name>
    <dbReference type="NCBI Taxonomy" id="401614"/>
    <lineage>
        <taxon>Bacteria</taxon>
        <taxon>Pseudomonadati</taxon>
        <taxon>Pseudomonadota</taxon>
        <taxon>Gammaproteobacteria</taxon>
        <taxon>Thiotrichales</taxon>
        <taxon>Francisellaceae</taxon>
        <taxon>Francisella</taxon>
    </lineage>
</organism>
<accession>A0Q5D8</accession>
<dbReference type="EMBL" id="CP000439">
    <property type="protein sequence ID" value="ABK89453.1"/>
    <property type="molecule type" value="Genomic_DNA"/>
</dbReference>
<dbReference type="RefSeq" id="WP_011733617.1">
    <property type="nucleotide sequence ID" value="NC_008601.1"/>
</dbReference>
<dbReference type="SMR" id="A0Q5D8"/>
<dbReference type="KEGG" id="ftn:FTN_0558"/>
<dbReference type="KEGG" id="ftx:AW25_1471"/>
<dbReference type="BioCyc" id="FTUL401614:G1G75-580-MONOMER"/>
<dbReference type="Proteomes" id="UP000000762">
    <property type="component" value="Chromosome"/>
</dbReference>
<dbReference type="GO" id="GO:0009279">
    <property type="term" value="C:cell outer membrane"/>
    <property type="evidence" value="ECO:0007669"/>
    <property type="project" value="UniProtKB-SubCell"/>
</dbReference>
<dbReference type="GO" id="GO:1990351">
    <property type="term" value="C:transporter complex"/>
    <property type="evidence" value="ECO:0007669"/>
    <property type="project" value="TreeGrafter"/>
</dbReference>
<dbReference type="GO" id="GO:0043165">
    <property type="term" value="P:Gram-negative-bacterium-type cell outer membrane assembly"/>
    <property type="evidence" value="ECO:0007669"/>
    <property type="project" value="UniProtKB-UniRule"/>
</dbReference>
<dbReference type="GO" id="GO:0015920">
    <property type="term" value="P:lipopolysaccharide transport"/>
    <property type="evidence" value="ECO:0007669"/>
    <property type="project" value="InterPro"/>
</dbReference>
<dbReference type="HAMAP" id="MF_01411">
    <property type="entry name" value="LPS_assembly_LptD"/>
    <property type="match status" value="1"/>
</dbReference>
<dbReference type="InterPro" id="IPR020889">
    <property type="entry name" value="LipoPS_assembly_LptD"/>
</dbReference>
<dbReference type="InterPro" id="IPR050218">
    <property type="entry name" value="LptD"/>
</dbReference>
<dbReference type="InterPro" id="IPR007543">
    <property type="entry name" value="LptD_C"/>
</dbReference>
<dbReference type="InterPro" id="IPR005653">
    <property type="entry name" value="OstA-like_N"/>
</dbReference>
<dbReference type="PANTHER" id="PTHR30189">
    <property type="entry name" value="LPS-ASSEMBLY PROTEIN"/>
    <property type="match status" value="1"/>
</dbReference>
<dbReference type="PANTHER" id="PTHR30189:SF1">
    <property type="entry name" value="LPS-ASSEMBLY PROTEIN LPTD"/>
    <property type="match status" value="1"/>
</dbReference>
<dbReference type="Pfam" id="PF04453">
    <property type="entry name" value="LptD"/>
    <property type="match status" value="1"/>
</dbReference>
<dbReference type="Pfam" id="PF03968">
    <property type="entry name" value="LptD_N"/>
    <property type="match status" value="1"/>
</dbReference>
<comment type="function">
    <text evidence="1">Together with LptE, is involved in the assembly of lipopolysaccharide (LPS) at the surface of the outer membrane.</text>
</comment>
<comment type="subunit">
    <text evidence="1">Component of the lipopolysaccharide transport and assembly complex. Interacts with LptE and LptA.</text>
</comment>
<comment type="subcellular location">
    <subcellularLocation>
        <location evidence="1">Cell outer membrane</location>
    </subcellularLocation>
</comment>
<comment type="similarity">
    <text evidence="1">Belongs to the LptD family.</text>
</comment>
<proteinExistence type="inferred from homology"/>
<feature type="signal peptide" evidence="1">
    <location>
        <begin position="1"/>
        <end position="24"/>
    </location>
</feature>
<feature type="chain" id="PRO_0000281606" description="LPS-assembly protein LptD">
    <location>
        <begin position="25"/>
        <end position="868"/>
    </location>
</feature>